<accession>Q8YC60</accession>
<reference key="1">
    <citation type="journal article" date="2002" name="Proc. Natl. Acad. Sci. U.S.A.">
        <title>The genome sequence of the facultative intracellular pathogen Brucella melitensis.</title>
        <authorList>
            <person name="DelVecchio V.G."/>
            <person name="Kapatral V."/>
            <person name="Redkar R.J."/>
            <person name="Patra G."/>
            <person name="Mujer C."/>
            <person name="Los T."/>
            <person name="Ivanova N."/>
            <person name="Anderson I."/>
            <person name="Bhattacharyya A."/>
            <person name="Lykidis A."/>
            <person name="Reznik G."/>
            <person name="Jablonski L."/>
            <person name="Larsen N."/>
            <person name="D'Souza M."/>
            <person name="Bernal A."/>
            <person name="Mazur M."/>
            <person name="Goltsman E."/>
            <person name="Selkov E."/>
            <person name="Elzer P.H."/>
            <person name="Hagius S."/>
            <person name="O'Callaghan D."/>
            <person name="Letesson J.-J."/>
            <person name="Haselkorn R."/>
            <person name="Kyrpides N.C."/>
            <person name="Overbeek R."/>
        </authorList>
    </citation>
    <scope>NUCLEOTIDE SEQUENCE [LARGE SCALE GENOMIC DNA]</scope>
    <source>
        <strain>ATCC 23456 / CCUG 17765 / NCTC 10094 / 16M</strain>
    </source>
</reference>
<keyword id="KW-0963">Cytoplasm</keyword>
<keyword id="KW-0378">Hydrolase</keyword>
<keyword id="KW-0540">Nuclease</keyword>
<keyword id="KW-0690">Ribosome biogenesis</keyword>
<protein>
    <recommendedName>
        <fullName evidence="1">Putative pre-16S rRNA nuclease</fullName>
        <ecNumber evidence="1">3.1.-.-</ecNumber>
    </recommendedName>
</protein>
<gene>
    <name type="ordered locus">BMEII0672</name>
</gene>
<organism>
    <name type="scientific">Brucella melitensis biotype 1 (strain ATCC 23456 / CCUG 17765 / NCTC 10094 / 16M)</name>
    <dbReference type="NCBI Taxonomy" id="224914"/>
    <lineage>
        <taxon>Bacteria</taxon>
        <taxon>Pseudomonadati</taxon>
        <taxon>Pseudomonadota</taxon>
        <taxon>Alphaproteobacteria</taxon>
        <taxon>Hyphomicrobiales</taxon>
        <taxon>Brucellaceae</taxon>
        <taxon>Brucella/Ochrobactrum group</taxon>
        <taxon>Brucella</taxon>
    </lineage>
</organism>
<name>YQGF_BRUME</name>
<dbReference type="EC" id="3.1.-.-" evidence="1"/>
<dbReference type="EMBL" id="AE008918">
    <property type="protein sequence ID" value="AAL53914.1"/>
    <property type="molecule type" value="Genomic_DNA"/>
</dbReference>
<dbReference type="PIR" id="AG3593">
    <property type="entry name" value="AG3593"/>
</dbReference>
<dbReference type="RefSeq" id="WP_004681902.1">
    <property type="nucleotide sequence ID" value="NC_003318.1"/>
</dbReference>
<dbReference type="SMR" id="Q8YC60"/>
<dbReference type="GeneID" id="45125947"/>
<dbReference type="KEGG" id="bme:BMEII0672"/>
<dbReference type="KEGG" id="bmel:DK63_2572"/>
<dbReference type="PATRIC" id="fig|224914.52.peg.2695"/>
<dbReference type="eggNOG" id="COG0816">
    <property type="taxonomic scope" value="Bacteria"/>
</dbReference>
<dbReference type="PhylomeDB" id="Q8YC60"/>
<dbReference type="Proteomes" id="UP000000419">
    <property type="component" value="Chromosome II"/>
</dbReference>
<dbReference type="GO" id="GO:0005829">
    <property type="term" value="C:cytosol"/>
    <property type="evidence" value="ECO:0007669"/>
    <property type="project" value="TreeGrafter"/>
</dbReference>
<dbReference type="GO" id="GO:0004518">
    <property type="term" value="F:nuclease activity"/>
    <property type="evidence" value="ECO:0007669"/>
    <property type="project" value="UniProtKB-KW"/>
</dbReference>
<dbReference type="GO" id="GO:0000967">
    <property type="term" value="P:rRNA 5'-end processing"/>
    <property type="evidence" value="ECO:0007669"/>
    <property type="project" value="UniProtKB-UniRule"/>
</dbReference>
<dbReference type="CDD" id="cd16964">
    <property type="entry name" value="YqgF"/>
    <property type="match status" value="1"/>
</dbReference>
<dbReference type="Gene3D" id="3.30.420.140">
    <property type="entry name" value="YqgF/RNase H-like domain"/>
    <property type="match status" value="1"/>
</dbReference>
<dbReference type="HAMAP" id="MF_00651">
    <property type="entry name" value="Nuclease_YqgF"/>
    <property type="match status" value="1"/>
</dbReference>
<dbReference type="InterPro" id="IPR012337">
    <property type="entry name" value="RNaseH-like_sf"/>
</dbReference>
<dbReference type="InterPro" id="IPR005227">
    <property type="entry name" value="YqgF"/>
</dbReference>
<dbReference type="InterPro" id="IPR006641">
    <property type="entry name" value="YqgF/RNaseH-like_dom"/>
</dbReference>
<dbReference type="InterPro" id="IPR037027">
    <property type="entry name" value="YqgF/RNaseH-like_dom_sf"/>
</dbReference>
<dbReference type="NCBIfam" id="TIGR00250">
    <property type="entry name" value="RNAse_H_YqgF"/>
    <property type="match status" value="1"/>
</dbReference>
<dbReference type="PANTHER" id="PTHR33317">
    <property type="entry name" value="POLYNUCLEOTIDYL TRANSFERASE, RIBONUCLEASE H-LIKE SUPERFAMILY PROTEIN"/>
    <property type="match status" value="1"/>
</dbReference>
<dbReference type="PANTHER" id="PTHR33317:SF4">
    <property type="entry name" value="POLYNUCLEOTIDYL TRANSFERASE, RIBONUCLEASE H-LIKE SUPERFAMILY PROTEIN"/>
    <property type="match status" value="1"/>
</dbReference>
<dbReference type="Pfam" id="PF03652">
    <property type="entry name" value="RuvX"/>
    <property type="match status" value="1"/>
</dbReference>
<dbReference type="SMART" id="SM00732">
    <property type="entry name" value="YqgFc"/>
    <property type="match status" value="1"/>
</dbReference>
<dbReference type="SUPFAM" id="SSF53098">
    <property type="entry name" value="Ribonuclease H-like"/>
    <property type="match status" value="1"/>
</dbReference>
<feature type="chain" id="PRO_0000172032" description="Putative pre-16S rRNA nuclease">
    <location>
        <begin position="1"/>
        <end position="162"/>
    </location>
</feature>
<comment type="function">
    <text evidence="1">Could be a nuclease involved in processing of the 5'-end of pre-16S rRNA.</text>
</comment>
<comment type="subcellular location">
    <subcellularLocation>
        <location evidence="1">Cytoplasm</location>
    </subcellularLocation>
</comment>
<comment type="similarity">
    <text evidence="1">Belongs to the YqgF nuclease family.</text>
</comment>
<proteinExistence type="inferred from homology"/>
<evidence type="ECO:0000255" key="1">
    <source>
        <dbReference type="HAMAP-Rule" id="MF_00651"/>
    </source>
</evidence>
<sequence length="162" mass="17555">MATAEIEEIPALLKPGQTVAGLDLGTKTIGLAVSDLGLSFAHPRPVIKRVKFTIDAQVLLKALETDKVGVIVIGLPMNMDGTAGPRVQATRAFVRTMQPLTDLPFVFWDERLSTVAVERALIGMDVSRGKRADRIDSAAAAFILQGALDRLHMMRRNDYDAG</sequence>